<comment type="function">
    <text evidence="1">Hydrolyzes a variety of simple alpha-D-galactoside as well as more complex molecules such as oligosaccharides and polysaccharides.</text>
</comment>
<comment type="catalytic activity">
    <reaction>
        <text>Hydrolysis of terminal, non-reducing alpha-D-galactose residues in alpha-D-galactosides, including galactose oligosaccharides, galactomannans and galactolipids.</text>
        <dbReference type="EC" id="3.2.1.22"/>
    </reaction>
</comment>
<comment type="cofactor">
    <cofactor evidence="1">
        <name>Mg(2+)</name>
        <dbReference type="ChEBI" id="CHEBI:18420"/>
    </cofactor>
</comment>
<comment type="cofactor">
    <cofactor evidence="1">
        <name>NAD(+)</name>
        <dbReference type="ChEBI" id="CHEBI:57540"/>
    </cofactor>
</comment>
<comment type="subunit">
    <text evidence="1">Homotetramer.</text>
</comment>
<comment type="subcellular location">
    <subcellularLocation>
        <location evidence="1">Secreted</location>
    </subcellularLocation>
</comment>
<comment type="similarity">
    <text evidence="4">Belongs to the glycosyl hydrolase 36 family.</text>
</comment>
<evidence type="ECO:0000250" key="1"/>
<evidence type="ECO:0000250" key="2">
    <source>
        <dbReference type="UniProtKB" id="Q9ALJ4"/>
    </source>
</evidence>
<evidence type="ECO:0000255" key="3"/>
<evidence type="ECO:0000305" key="4"/>
<gene>
    <name type="primary">aglC</name>
    <name type="ORF">ATEG_02312</name>
</gene>
<sequence>MVAFMNSATFVAGLFTLWSRPIWATPASNTNAVVVNGTAFTLNGDHVSYRFHVDDATGDLFSDHFGPRVSGNFPTEIVSQVNGWVNTIGRVRREFPDQGRGDFRIPAIRIRQTAGYTVSELLYRSHTVIPGKPALPGLPATFGSEEDVTTLVVHLYDEISEVAADLSYSIFPKYDAVVRSVNVTNQGAGNITIETLASLSVDFPYEDLDMVYLRGDWAREAHSERRKVEYGTQGFDSSAGYSSHLHNPFLAIMNPATTESQGETWGFSLVYSGSFAVNVERGSQGFTRALLGLNPGQLSWVLRPGESLVSPECVAVYSADGIGGMSRLLHRLYRNHLIKSKFAVSDRPVLLNSWEGLGFNYNETTVYQLATEAAELGVKLFVLDDGWFGDKYPRTADNAGLGDWVPNPDRFPHGLPHEVDRITALHPGNDTSTNLRFGLWFEPEMVNPNSSLYHQHPDWALHAGSYPRTLTRNQLVLNMALPEVQDYVIKSVSDILDSADISYVKWDNNRGIHETPSPSTDHQYMLGMYRVFDNLTTKYPNVLWEGCASGGGRFDPGVLQYFPQIWTSDDTDALERITIQMGTSLAYPPSAMGAHLSAVPNQQTGRTLPITFRAHVAMMGGSFGLELNPAHMPDDERDAVPGLIALAERVNPIVLTGDMYRLSPHDSQWPAVLFISPDGEQAVLFYFQTSPRVDNSIPRVKMQGLDPQAVYSVDGDAEYSGATLMNVGLQFPFDSDVGSKVVFFQRL</sequence>
<name>AGALC_ASPTN</name>
<dbReference type="EC" id="3.2.1.22"/>
<dbReference type="EMBL" id="CH476596">
    <property type="protein sequence ID" value="EAU37274.1"/>
    <property type="molecule type" value="Genomic_DNA"/>
</dbReference>
<dbReference type="RefSeq" id="XP_001211490.1">
    <property type="nucleotide sequence ID" value="XM_001211490.1"/>
</dbReference>
<dbReference type="SMR" id="Q0CVH2"/>
<dbReference type="STRING" id="341663.Q0CVH2"/>
<dbReference type="GlyCosmos" id="Q0CVH2">
    <property type="glycosylation" value="7 sites, No reported glycans"/>
</dbReference>
<dbReference type="EnsemblFungi" id="EAU37274">
    <property type="protein sequence ID" value="EAU37274"/>
    <property type="gene ID" value="ATEG_02312"/>
</dbReference>
<dbReference type="GeneID" id="4316651"/>
<dbReference type="VEuPathDB" id="FungiDB:ATEG_02312"/>
<dbReference type="eggNOG" id="ENOG502QWG1">
    <property type="taxonomic scope" value="Eukaryota"/>
</dbReference>
<dbReference type="HOGENOM" id="CLU_009640_2_1_1"/>
<dbReference type="OMA" id="MSQQFHR"/>
<dbReference type="OrthoDB" id="5795902at2759"/>
<dbReference type="Proteomes" id="UP000007963">
    <property type="component" value="Unassembled WGS sequence"/>
</dbReference>
<dbReference type="GO" id="GO:0005576">
    <property type="term" value="C:extracellular region"/>
    <property type="evidence" value="ECO:0007669"/>
    <property type="project" value="UniProtKB-SubCell"/>
</dbReference>
<dbReference type="GO" id="GO:0004557">
    <property type="term" value="F:alpha-galactosidase activity"/>
    <property type="evidence" value="ECO:0007669"/>
    <property type="project" value="UniProtKB-EC"/>
</dbReference>
<dbReference type="GO" id="GO:0000272">
    <property type="term" value="P:polysaccharide catabolic process"/>
    <property type="evidence" value="ECO:0007669"/>
    <property type="project" value="UniProtKB-KW"/>
</dbReference>
<dbReference type="CDD" id="cd14791">
    <property type="entry name" value="GH36"/>
    <property type="match status" value="1"/>
</dbReference>
<dbReference type="FunFam" id="3.20.20.70:FF:000118">
    <property type="entry name" value="Alpha-galactosidase"/>
    <property type="match status" value="1"/>
</dbReference>
<dbReference type="Gene3D" id="3.20.20.70">
    <property type="entry name" value="Aldolase class I"/>
    <property type="match status" value="1"/>
</dbReference>
<dbReference type="Gene3D" id="2.70.98.60">
    <property type="entry name" value="alpha-galactosidase from lactobacil brevis"/>
    <property type="match status" value="1"/>
</dbReference>
<dbReference type="Gene3D" id="2.60.40.1180">
    <property type="entry name" value="Golgi alpha-mannosidase II"/>
    <property type="match status" value="1"/>
</dbReference>
<dbReference type="InterPro" id="IPR013785">
    <property type="entry name" value="Aldolase_TIM"/>
</dbReference>
<dbReference type="InterPro" id="IPR038417">
    <property type="entry name" value="Alpga-gal_N_sf"/>
</dbReference>
<dbReference type="InterPro" id="IPR050985">
    <property type="entry name" value="Alpha-glycosidase_related"/>
</dbReference>
<dbReference type="InterPro" id="IPR002252">
    <property type="entry name" value="Glyco_hydro_36"/>
</dbReference>
<dbReference type="InterPro" id="IPR031705">
    <property type="entry name" value="Glyco_hydro_36_C"/>
</dbReference>
<dbReference type="InterPro" id="IPR031704">
    <property type="entry name" value="Glyco_hydro_36_N"/>
</dbReference>
<dbReference type="InterPro" id="IPR013780">
    <property type="entry name" value="Glyco_hydro_b"/>
</dbReference>
<dbReference type="InterPro" id="IPR017853">
    <property type="entry name" value="Glycoside_hydrolase_SF"/>
</dbReference>
<dbReference type="PANTHER" id="PTHR43053:SF3">
    <property type="entry name" value="ALPHA-GALACTOSIDASE C-RELATED"/>
    <property type="match status" value="1"/>
</dbReference>
<dbReference type="PANTHER" id="PTHR43053">
    <property type="entry name" value="GLYCOSIDASE FAMILY 31"/>
    <property type="match status" value="1"/>
</dbReference>
<dbReference type="Pfam" id="PF16874">
    <property type="entry name" value="Glyco_hydro_36C"/>
    <property type="match status" value="1"/>
</dbReference>
<dbReference type="Pfam" id="PF16875">
    <property type="entry name" value="Glyco_hydro_36N"/>
    <property type="match status" value="1"/>
</dbReference>
<dbReference type="Pfam" id="PF02065">
    <property type="entry name" value="Melibiase"/>
    <property type="match status" value="1"/>
</dbReference>
<dbReference type="PIRSF" id="PIRSF005536">
    <property type="entry name" value="Agal"/>
    <property type="match status" value="1"/>
</dbReference>
<dbReference type="PRINTS" id="PR00743">
    <property type="entry name" value="GLHYDRLASE36"/>
</dbReference>
<dbReference type="SUPFAM" id="SSF51445">
    <property type="entry name" value="(Trans)glycosidases"/>
    <property type="match status" value="1"/>
</dbReference>
<reference key="1">
    <citation type="submission" date="2005-09" db="EMBL/GenBank/DDBJ databases">
        <title>Annotation of the Aspergillus terreus NIH2624 genome.</title>
        <authorList>
            <person name="Birren B.W."/>
            <person name="Lander E.S."/>
            <person name="Galagan J.E."/>
            <person name="Nusbaum C."/>
            <person name="Devon K."/>
            <person name="Henn M."/>
            <person name="Ma L.-J."/>
            <person name="Jaffe D.B."/>
            <person name="Butler J."/>
            <person name="Alvarez P."/>
            <person name="Gnerre S."/>
            <person name="Grabherr M."/>
            <person name="Kleber M."/>
            <person name="Mauceli E.W."/>
            <person name="Brockman W."/>
            <person name="Rounsley S."/>
            <person name="Young S.K."/>
            <person name="LaButti K."/>
            <person name="Pushparaj V."/>
            <person name="DeCaprio D."/>
            <person name="Crawford M."/>
            <person name="Koehrsen M."/>
            <person name="Engels R."/>
            <person name="Montgomery P."/>
            <person name="Pearson M."/>
            <person name="Howarth C."/>
            <person name="Larson L."/>
            <person name="Luoma S."/>
            <person name="White J."/>
            <person name="Alvarado L."/>
            <person name="Kodira C.D."/>
            <person name="Zeng Q."/>
            <person name="Oleary S."/>
            <person name="Yandava C."/>
            <person name="Denning D.W."/>
            <person name="Nierman W.C."/>
            <person name="Milne T."/>
            <person name="Madden K."/>
        </authorList>
    </citation>
    <scope>NUCLEOTIDE SEQUENCE [LARGE SCALE GENOMIC DNA]</scope>
    <source>
        <strain>NIH 2624 / FGSC A1156</strain>
    </source>
</reference>
<accession>Q0CVH2</accession>
<feature type="signal peptide" evidence="3">
    <location>
        <begin position="1"/>
        <end position="24"/>
    </location>
</feature>
<feature type="chain" id="PRO_0000395066" description="Probable alpha-galactosidase C">
    <location>
        <begin position="25"/>
        <end position="747"/>
    </location>
</feature>
<feature type="active site" description="Nucleophile" evidence="2">
    <location>
        <position position="507"/>
    </location>
</feature>
<feature type="active site" description="Proton donor" evidence="2">
    <location>
        <position position="569"/>
    </location>
</feature>
<feature type="glycosylation site" description="N-linked (GlcNAc...) asparagine" evidence="3">
    <location>
        <position position="36"/>
    </location>
</feature>
<feature type="glycosylation site" description="N-linked (GlcNAc...) asparagine" evidence="3">
    <location>
        <position position="182"/>
    </location>
</feature>
<feature type="glycosylation site" description="N-linked (GlcNAc...) asparagine" evidence="3">
    <location>
        <position position="190"/>
    </location>
</feature>
<feature type="glycosylation site" description="N-linked (GlcNAc...) asparagine" evidence="3">
    <location>
        <position position="362"/>
    </location>
</feature>
<feature type="glycosylation site" description="N-linked (GlcNAc...) asparagine" evidence="3">
    <location>
        <position position="429"/>
    </location>
</feature>
<feature type="glycosylation site" description="N-linked (GlcNAc...) asparagine" evidence="3">
    <location>
        <position position="449"/>
    </location>
</feature>
<feature type="glycosylation site" description="N-linked (GlcNAc...) asparagine" evidence="3">
    <location>
        <position position="534"/>
    </location>
</feature>
<keyword id="KW-0119">Carbohydrate metabolism</keyword>
<keyword id="KW-0325">Glycoprotein</keyword>
<keyword id="KW-0326">Glycosidase</keyword>
<keyword id="KW-0378">Hydrolase</keyword>
<keyword id="KW-0460">Magnesium</keyword>
<keyword id="KW-0520">NAD</keyword>
<keyword id="KW-0624">Polysaccharide degradation</keyword>
<keyword id="KW-1185">Reference proteome</keyword>
<keyword id="KW-0964">Secreted</keyword>
<keyword id="KW-0732">Signal</keyword>
<organism>
    <name type="scientific">Aspergillus terreus (strain NIH 2624 / FGSC A1156)</name>
    <dbReference type="NCBI Taxonomy" id="341663"/>
    <lineage>
        <taxon>Eukaryota</taxon>
        <taxon>Fungi</taxon>
        <taxon>Dikarya</taxon>
        <taxon>Ascomycota</taxon>
        <taxon>Pezizomycotina</taxon>
        <taxon>Eurotiomycetes</taxon>
        <taxon>Eurotiomycetidae</taxon>
        <taxon>Eurotiales</taxon>
        <taxon>Aspergillaceae</taxon>
        <taxon>Aspergillus</taxon>
        <taxon>Aspergillus subgen. Circumdati</taxon>
    </lineage>
</organism>
<protein>
    <recommendedName>
        <fullName>Probable alpha-galactosidase C</fullName>
        <ecNumber>3.2.1.22</ecNumber>
    </recommendedName>
    <alternativeName>
        <fullName>Melibiase C</fullName>
    </alternativeName>
</protein>
<proteinExistence type="inferred from homology"/>